<feature type="chain" id="PRO_0000417051" description="Cytosolic sulfotransferase 3">
    <location>
        <begin position="1"/>
        <end position="314"/>
    </location>
</feature>
<feature type="active site" description="Proton acceptor" evidence="1">
    <location>
        <position position="121"/>
    </location>
</feature>
<feature type="binding site" evidence="1">
    <location>
        <begin position="71"/>
        <end position="76"/>
    </location>
    <ligand>
        <name>3'-phosphoadenylyl sulfate</name>
        <dbReference type="ChEBI" id="CHEBI:58339"/>
    </ligand>
</feature>
<feature type="binding site" evidence="1">
    <location>
        <position position="143"/>
    </location>
    <ligand>
        <name>3'-phosphoadenylyl sulfate</name>
        <dbReference type="ChEBI" id="CHEBI:58339"/>
    </ligand>
</feature>
<feature type="binding site" evidence="1">
    <location>
        <position position="151"/>
    </location>
    <ligand>
        <name>3'-phosphoadenylyl sulfate</name>
        <dbReference type="ChEBI" id="CHEBI:58339"/>
    </ligand>
</feature>
<feature type="binding site" evidence="1">
    <location>
        <position position="209"/>
    </location>
    <ligand>
        <name>3'-phosphoadenylyl sulfate</name>
        <dbReference type="ChEBI" id="CHEBI:58339"/>
    </ligand>
</feature>
<feature type="binding site" evidence="1">
    <location>
        <begin position="275"/>
        <end position="277"/>
    </location>
    <ligand>
        <name>3'-phosphoadenylyl sulfate</name>
        <dbReference type="ChEBI" id="CHEBI:58339"/>
    </ligand>
</feature>
<dbReference type="EC" id="2.8.2.-"/>
<dbReference type="EMBL" id="AL049171">
    <property type="protein sequence ID" value="CAB38957.1"/>
    <property type="molecule type" value="Genomic_DNA"/>
</dbReference>
<dbReference type="EMBL" id="AL161564">
    <property type="protein sequence ID" value="CAB79483.1"/>
    <property type="molecule type" value="Genomic_DNA"/>
</dbReference>
<dbReference type="EMBL" id="CP002687">
    <property type="protein sequence ID" value="AEE85179.1"/>
    <property type="molecule type" value="Genomic_DNA"/>
</dbReference>
<dbReference type="PIR" id="T06012">
    <property type="entry name" value="T06012"/>
</dbReference>
<dbReference type="RefSeq" id="NP_194358.1">
    <property type="nucleotide sequence ID" value="NM_118761.1"/>
</dbReference>
<dbReference type="SMR" id="Q9STQ6"/>
<dbReference type="FunCoup" id="Q9STQ6">
    <property type="interactions" value="39"/>
</dbReference>
<dbReference type="STRING" id="3702.Q9STQ6"/>
<dbReference type="PaxDb" id="3702-AT4G26280.1"/>
<dbReference type="EnsemblPlants" id="AT4G26280.1">
    <property type="protein sequence ID" value="AT4G26280.1"/>
    <property type="gene ID" value="AT4G26280"/>
</dbReference>
<dbReference type="GeneID" id="828734"/>
<dbReference type="Gramene" id="AT4G26280.1">
    <property type="protein sequence ID" value="AT4G26280.1"/>
    <property type="gene ID" value="AT4G26280"/>
</dbReference>
<dbReference type="KEGG" id="ath:AT4G26280"/>
<dbReference type="Araport" id="AT4G26280"/>
<dbReference type="TAIR" id="AT4G26280"/>
<dbReference type="eggNOG" id="KOG1584">
    <property type="taxonomic scope" value="Eukaryota"/>
</dbReference>
<dbReference type="HOGENOM" id="CLU_027239_0_3_1"/>
<dbReference type="InParanoid" id="Q9STQ6"/>
<dbReference type="OMA" id="WHIVCRS"/>
<dbReference type="PhylomeDB" id="Q9STQ6"/>
<dbReference type="BioCyc" id="ARA:AT4G26280-MONOMER"/>
<dbReference type="PRO" id="PR:Q9STQ6"/>
<dbReference type="Proteomes" id="UP000006548">
    <property type="component" value="Chromosome 4"/>
</dbReference>
<dbReference type="ExpressionAtlas" id="Q9STQ6">
    <property type="expression patterns" value="baseline and differential"/>
</dbReference>
<dbReference type="GO" id="GO:0005737">
    <property type="term" value="C:cytoplasm"/>
    <property type="evidence" value="ECO:0007669"/>
    <property type="project" value="UniProtKB-SubCell"/>
</dbReference>
<dbReference type="GO" id="GO:0008146">
    <property type="term" value="F:sulfotransferase activity"/>
    <property type="evidence" value="ECO:0007669"/>
    <property type="project" value="InterPro"/>
</dbReference>
<dbReference type="Gene3D" id="3.40.50.300">
    <property type="entry name" value="P-loop containing nucleotide triphosphate hydrolases"/>
    <property type="match status" value="1"/>
</dbReference>
<dbReference type="InterPro" id="IPR027417">
    <property type="entry name" value="P-loop_NTPase"/>
</dbReference>
<dbReference type="InterPro" id="IPR000863">
    <property type="entry name" value="Sulfotransferase_dom"/>
</dbReference>
<dbReference type="PANTHER" id="PTHR11783">
    <property type="entry name" value="SULFOTRANSFERASE SULT"/>
    <property type="match status" value="1"/>
</dbReference>
<dbReference type="Pfam" id="PF00685">
    <property type="entry name" value="Sulfotransfer_1"/>
    <property type="match status" value="1"/>
</dbReference>
<dbReference type="SUPFAM" id="SSF52540">
    <property type="entry name" value="P-loop containing nucleoside triphosphate hydrolases"/>
    <property type="match status" value="1"/>
</dbReference>
<name>SOT3_ARATH</name>
<evidence type="ECO:0000250" key="1"/>
<evidence type="ECO:0000305" key="2"/>
<comment type="function">
    <text evidence="1">Sulfotransferase that utilizes 3'-phospho-5'-adenylyl sulfate (PAPS) as sulfonate donor.</text>
</comment>
<comment type="subcellular location">
    <subcellularLocation>
        <location evidence="1">Cytoplasm</location>
    </subcellularLocation>
</comment>
<comment type="similarity">
    <text evidence="2">Belongs to the sulfotransferase 1 family.</text>
</comment>
<proteinExistence type="inferred from homology"/>
<gene>
    <name type="primary">SOT3</name>
    <name type="ordered locus">At4g26280</name>
    <name type="ORF">T25K17.90</name>
</gene>
<protein>
    <recommendedName>
        <fullName>Cytosolic sulfotransferase 3</fullName>
        <shortName>AtSOT3</shortName>
        <ecNumber>2.8.2.-</ecNumber>
    </recommendedName>
</protein>
<keyword id="KW-0963">Cytoplasm</keyword>
<keyword id="KW-1185">Reference proteome</keyword>
<keyword id="KW-0808">Transferase</keyword>
<organism>
    <name type="scientific">Arabidopsis thaliana</name>
    <name type="common">Mouse-ear cress</name>
    <dbReference type="NCBI Taxonomy" id="3702"/>
    <lineage>
        <taxon>Eukaryota</taxon>
        <taxon>Viridiplantae</taxon>
        <taxon>Streptophyta</taxon>
        <taxon>Embryophyta</taxon>
        <taxon>Tracheophyta</taxon>
        <taxon>Spermatophyta</taxon>
        <taxon>Magnoliopsida</taxon>
        <taxon>eudicotyledons</taxon>
        <taxon>Gunneridae</taxon>
        <taxon>Pentapetalae</taxon>
        <taxon>rosids</taxon>
        <taxon>malvids</taxon>
        <taxon>Brassicales</taxon>
        <taxon>Brassicaceae</taxon>
        <taxon>Camelineae</taxon>
        <taxon>Arabidopsis</taxon>
    </lineage>
</organism>
<reference key="1">
    <citation type="journal article" date="1999" name="Nature">
        <title>Sequence and analysis of chromosome 4 of the plant Arabidopsis thaliana.</title>
        <authorList>
            <person name="Mayer K.F.X."/>
            <person name="Schueller C."/>
            <person name="Wambutt R."/>
            <person name="Murphy G."/>
            <person name="Volckaert G."/>
            <person name="Pohl T."/>
            <person name="Duesterhoeft A."/>
            <person name="Stiekema W."/>
            <person name="Entian K.-D."/>
            <person name="Terryn N."/>
            <person name="Harris B."/>
            <person name="Ansorge W."/>
            <person name="Brandt P."/>
            <person name="Grivell L.A."/>
            <person name="Rieger M."/>
            <person name="Weichselgartner M."/>
            <person name="de Simone V."/>
            <person name="Obermaier B."/>
            <person name="Mache R."/>
            <person name="Mueller M."/>
            <person name="Kreis M."/>
            <person name="Delseny M."/>
            <person name="Puigdomenech P."/>
            <person name="Watson M."/>
            <person name="Schmidtheini T."/>
            <person name="Reichert B."/>
            <person name="Portetelle D."/>
            <person name="Perez-Alonso M."/>
            <person name="Boutry M."/>
            <person name="Bancroft I."/>
            <person name="Vos P."/>
            <person name="Hoheisel J."/>
            <person name="Zimmermann W."/>
            <person name="Wedler H."/>
            <person name="Ridley P."/>
            <person name="Langham S.-A."/>
            <person name="McCullagh B."/>
            <person name="Bilham L."/>
            <person name="Robben J."/>
            <person name="van der Schueren J."/>
            <person name="Grymonprez B."/>
            <person name="Chuang Y.-J."/>
            <person name="Vandenbussche F."/>
            <person name="Braeken M."/>
            <person name="Weltjens I."/>
            <person name="Voet M."/>
            <person name="Bastiaens I."/>
            <person name="Aert R."/>
            <person name="Defoor E."/>
            <person name="Weitzenegger T."/>
            <person name="Bothe G."/>
            <person name="Ramsperger U."/>
            <person name="Hilbert H."/>
            <person name="Braun M."/>
            <person name="Holzer E."/>
            <person name="Brandt A."/>
            <person name="Peters S."/>
            <person name="van Staveren M."/>
            <person name="Dirkse W."/>
            <person name="Mooijman P."/>
            <person name="Klein Lankhorst R."/>
            <person name="Rose M."/>
            <person name="Hauf J."/>
            <person name="Koetter P."/>
            <person name="Berneiser S."/>
            <person name="Hempel S."/>
            <person name="Feldpausch M."/>
            <person name="Lamberth S."/>
            <person name="Van den Daele H."/>
            <person name="De Keyser A."/>
            <person name="Buysshaert C."/>
            <person name="Gielen J."/>
            <person name="Villarroel R."/>
            <person name="De Clercq R."/>
            <person name="van Montagu M."/>
            <person name="Rogers J."/>
            <person name="Cronin A."/>
            <person name="Quail M.A."/>
            <person name="Bray-Allen S."/>
            <person name="Clark L."/>
            <person name="Doggett J."/>
            <person name="Hall S."/>
            <person name="Kay M."/>
            <person name="Lennard N."/>
            <person name="McLay K."/>
            <person name="Mayes R."/>
            <person name="Pettett A."/>
            <person name="Rajandream M.A."/>
            <person name="Lyne M."/>
            <person name="Benes V."/>
            <person name="Rechmann S."/>
            <person name="Borkova D."/>
            <person name="Bloecker H."/>
            <person name="Scharfe M."/>
            <person name="Grimm M."/>
            <person name="Loehnert T.-H."/>
            <person name="Dose S."/>
            <person name="de Haan M."/>
            <person name="Maarse A.C."/>
            <person name="Schaefer M."/>
            <person name="Mueller-Auer S."/>
            <person name="Gabel C."/>
            <person name="Fuchs M."/>
            <person name="Fartmann B."/>
            <person name="Granderath K."/>
            <person name="Dauner D."/>
            <person name="Herzl A."/>
            <person name="Neumann S."/>
            <person name="Argiriou A."/>
            <person name="Vitale D."/>
            <person name="Liguori R."/>
            <person name="Piravandi E."/>
            <person name="Massenet O."/>
            <person name="Quigley F."/>
            <person name="Clabauld G."/>
            <person name="Muendlein A."/>
            <person name="Felber R."/>
            <person name="Schnabl S."/>
            <person name="Hiller R."/>
            <person name="Schmidt W."/>
            <person name="Lecharny A."/>
            <person name="Aubourg S."/>
            <person name="Chefdor F."/>
            <person name="Cooke R."/>
            <person name="Berger C."/>
            <person name="Monfort A."/>
            <person name="Casacuberta E."/>
            <person name="Gibbons T."/>
            <person name="Weber N."/>
            <person name="Vandenbol M."/>
            <person name="Bargues M."/>
            <person name="Terol J."/>
            <person name="Torres A."/>
            <person name="Perez-Perez A."/>
            <person name="Purnelle B."/>
            <person name="Bent E."/>
            <person name="Johnson S."/>
            <person name="Tacon D."/>
            <person name="Jesse T."/>
            <person name="Heijnen L."/>
            <person name="Schwarz S."/>
            <person name="Scholler P."/>
            <person name="Heber S."/>
            <person name="Francs P."/>
            <person name="Bielke C."/>
            <person name="Frishman D."/>
            <person name="Haase D."/>
            <person name="Lemcke K."/>
            <person name="Mewes H.-W."/>
            <person name="Stocker S."/>
            <person name="Zaccaria P."/>
            <person name="Bevan M."/>
            <person name="Wilson R.K."/>
            <person name="de la Bastide M."/>
            <person name="Habermann K."/>
            <person name="Parnell L."/>
            <person name="Dedhia N."/>
            <person name="Gnoj L."/>
            <person name="Schutz K."/>
            <person name="Huang E."/>
            <person name="Spiegel L."/>
            <person name="Sekhon M."/>
            <person name="Murray J."/>
            <person name="Sheet P."/>
            <person name="Cordes M."/>
            <person name="Abu-Threideh J."/>
            <person name="Stoneking T."/>
            <person name="Kalicki J."/>
            <person name="Graves T."/>
            <person name="Harmon G."/>
            <person name="Edwards J."/>
            <person name="Latreille P."/>
            <person name="Courtney L."/>
            <person name="Cloud J."/>
            <person name="Abbott A."/>
            <person name="Scott K."/>
            <person name="Johnson D."/>
            <person name="Minx P."/>
            <person name="Bentley D."/>
            <person name="Fulton B."/>
            <person name="Miller N."/>
            <person name="Greco T."/>
            <person name="Kemp K."/>
            <person name="Kramer J."/>
            <person name="Fulton L."/>
            <person name="Mardis E."/>
            <person name="Dante M."/>
            <person name="Pepin K."/>
            <person name="Hillier L.W."/>
            <person name="Nelson J."/>
            <person name="Spieth J."/>
            <person name="Ryan E."/>
            <person name="Andrews S."/>
            <person name="Geisel C."/>
            <person name="Layman D."/>
            <person name="Du H."/>
            <person name="Ali J."/>
            <person name="Berghoff A."/>
            <person name="Jones K."/>
            <person name="Drone K."/>
            <person name="Cotton M."/>
            <person name="Joshu C."/>
            <person name="Antonoiu B."/>
            <person name="Zidanic M."/>
            <person name="Strong C."/>
            <person name="Sun H."/>
            <person name="Lamar B."/>
            <person name="Yordan C."/>
            <person name="Ma P."/>
            <person name="Zhong J."/>
            <person name="Preston R."/>
            <person name="Vil D."/>
            <person name="Shekher M."/>
            <person name="Matero A."/>
            <person name="Shah R."/>
            <person name="Swaby I.K."/>
            <person name="O'Shaughnessy A."/>
            <person name="Rodriguez M."/>
            <person name="Hoffman J."/>
            <person name="Till S."/>
            <person name="Granat S."/>
            <person name="Shohdy N."/>
            <person name="Hasegawa A."/>
            <person name="Hameed A."/>
            <person name="Lodhi M."/>
            <person name="Johnson A."/>
            <person name="Chen E."/>
            <person name="Marra M.A."/>
            <person name="Martienssen R."/>
            <person name="McCombie W.R."/>
        </authorList>
    </citation>
    <scope>NUCLEOTIDE SEQUENCE [LARGE SCALE GENOMIC DNA]</scope>
    <source>
        <strain>cv. Columbia</strain>
    </source>
</reference>
<reference key="2">
    <citation type="journal article" date="2017" name="Plant J.">
        <title>Araport11: a complete reannotation of the Arabidopsis thaliana reference genome.</title>
        <authorList>
            <person name="Cheng C.Y."/>
            <person name="Krishnakumar V."/>
            <person name="Chan A.P."/>
            <person name="Thibaud-Nissen F."/>
            <person name="Schobel S."/>
            <person name="Town C.D."/>
        </authorList>
    </citation>
    <scope>GENOME REANNOTATION</scope>
    <source>
        <strain>cv. Columbia</strain>
    </source>
</reference>
<reference key="3">
    <citation type="journal article" date="2004" name="J. Exp. Bot.">
        <title>The multi-protein family of Arabidopsis sulphotransferases and their relatives in other plant species.</title>
        <authorList>
            <person name="Klein M."/>
            <person name="Papenbrock J."/>
        </authorList>
    </citation>
    <scope>GENE FAMILY</scope>
    <scope>NOMENCLATURE</scope>
</reference>
<sequence length="314" mass="36285">MEKWMNLRDEDLTEETKTLISSLSSEKGYLGRNLCKYQGSWYYYNFLQGVLNFQRGFKPQDTDIIVASYPKSGTLWLKALTVALFERTKNPSHDDPMSHPLLSNNPHNLLSSSSPRLFSTHTPFHTLQVAVKDSPCKVVYICRDAKDSLVSRWHIVCRSLNKEEDRTILESMFESFCSGVCLFGPFWDHILSYWKASLEKPKQVLFMRYDEIKTDPHGQLKKLAEFLGCPFSKEEEKNGSLNKILEMCSLPNLSSLEVNKTGKSINGIEYKNHFRKGIVGDWKNHLTPEMGSKIDMIMKEKLKDYSEVWFENAL</sequence>
<accession>Q9STQ6</accession>